<comment type="subunit">
    <text evidence="3">Component of the small ribosomal subunit. Mature ribosomes consist of a small (40S) and a large (60S) subunit. The 40S subunit contains about 33 different proteins and 1 molecule of RNA (18S). The 60S subunit contains about 49 different proteins and 3 molecules of RNA (25S, 5.8S and 5S).</text>
</comment>
<comment type="subcellular location">
    <subcellularLocation>
        <location evidence="3">Cytoplasm</location>
    </subcellularLocation>
</comment>
<comment type="similarity">
    <text evidence="3">Belongs to the eukaryotic ribosomal protein eS1 family.</text>
</comment>
<reference key="1">
    <citation type="journal article" date="2007" name="Proc. Natl. Acad. Sci. U.S.A.">
        <title>Genome sequencing and comparative analysis of Saccharomyces cerevisiae strain YJM789.</title>
        <authorList>
            <person name="Wei W."/>
            <person name="McCusker J.H."/>
            <person name="Hyman R.W."/>
            <person name="Jones T."/>
            <person name="Ning Y."/>
            <person name="Cao Z."/>
            <person name="Gu Z."/>
            <person name="Bruno D."/>
            <person name="Miranda M."/>
            <person name="Nguyen M."/>
            <person name="Wilhelmy J."/>
            <person name="Komp C."/>
            <person name="Tamse R."/>
            <person name="Wang X."/>
            <person name="Jia P."/>
            <person name="Luedi P."/>
            <person name="Oefner P.J."/>
            <person name="David L."/>
            <person name="Dietrich F.S."/>
            <person name="Li Y."/>
            <person name="Davis R.W."/>
            <person name="Steinmetz L.M."/>
        </authorList>
    </citation>
    <scope>NUCLEOTIDE SEQUENCE [LARGE SCALE GENOMIC DNA]</scope>
    <source>
        <strain>YJM789</strain>
    </source>
</reference>
<proteinExistence type="inferred from homology"/>
<gene>
    <name evidence="3" type="primary">RPS1B</name>
    <name type="ORF">SCY_4114</name>
</gene>
<keyword id="KW-0007">Acetylation</keyword>
<keyword id="KW-0963">Cytoplasm</keyword>
<keyword id="KW-1017">Isopeptide bond</keyword>
<keyword id="KW-0597">Phosphoprotein</keyword>
<keyword id="KW-0687">Ribonucleoprotein</keyword>
<keyword id="KW-0689">Ribosomal protein</keyword>
<keyword id="KW-0832">Ubl conjugation</keyword>
<name>RS3A2_YEAS7</name>
<feature type="initiator methionine" description="Removed" evidence="3">
    <location>
        <position position="1"/>
    </location>
</feature>
<feature type="chain" id="PRO_0000389411" description="Small ribosomal subunit protein eS1B">
    <location>
        <begin position="2"/>
        <end position="255"/>
    </location>
</feature>
<feature type="modified residue" description="N-acetylalanine; partial" evidence="2 3">
    <location>
        <position position="2"/>
    </location>
</feature>
<feature type="modified residue" description="Phosphoserine" evidence="1">
    <location>
        <position position="245"/>
    </location>
</feature>
<feature type="modified residue" description="Phosphothreonine" evidence="1">
    <location>
        <position position="254"/>
    </location>
</feature>
<feature type="cross-link" description="Glycyl lysine isopeptide (Lys-Gly) (interchain with G-Cter in ubiquitin)" evidence="1">
    <location>
        <position position="248"/>
    </location>
</feature>
<accession>A6ZM02</accession>
<sequence>MAVGKNKRLSRGKKGLKKKVVDPFTRKEWFDIKAPSTFENRNVGKTLVNKSTGLKNASDALKGRVVEVCLADLQGSEDHSFRKVKLRVDEVQGKNLLTNFHGMDFTTDKLRSMVRKWQTLIEANVTVKTSDDYVLRIFAIAFTRKQANQVKRHSYAQSSHIRAIRKVISEILTREVQNSTLAQLTSKLIPEVINKEIENATKDIFPLQNIHVRKVKLLKQPKFDVGALMALHGEGSGEEKGKKVSGFKDEVLETV</sequence>
<evidence type="ECO:0000250" key="1">
    <source>
        <dbReference type="UniProtKB" id="P23248"/>
    </source>
</evidence>
<evidence type="ECO:0000250" key="2">
    <source>
        <dbReference type="UniProtKB" id="P33442"/>
    </source>
</evidence>
<evidence type="ECO:0000255" key="3">
    <source>
        <dbReference type="HAMAP-Rule" id="MF_03122"/>
    </source>
</evidence>
<evidence type="ECO:0000305" key="4"/>
<organism>
    <name type="scientific">Saccharomyces cerevisiae (strain YJM789)</name>
    <name type="common">Baker's yeast</name>
    <dbReference type="NCBI Taxonomy" id="307796"/>
    <lineage>
        <taxon>Eukaryota</taxon>
        <taxon>Fungi</taxon>
        <taxon>Dikarya</taxon>
        <taxon>Ascomycota</taxon>
        <taxon>Saccharomycotina</taxon>
        <taxon>Saccharomycetes</taxon>
        <taxon>Saccharomycetales</taxon>
        <taxon>Saccharomycetaceae</taxon>
        <taxon>Saccharomyces</taxon>
    </lineage>
</organism>
<dbReference type="EMBL" id="AAFW02000020">
    <property type="protein sequence ID" value="EDN64332.1"/>
    <property type="molecule type" value="Genomic_DNA"/>
</dbReference>
<dbReference type="SMR" id="A6ZM02"/>
<dbReference type="HOGENOM" id="CLU_062507_0_0_1"/>
<dbReference type="Proteomes" id="UP000007060">
    <property type="component" value="Unassembled WGS sequence"/>
</dbReference>
<dbReference type="GO" id="GO:0022627">
    <property type="term" value="C:cytosolic small ribosomal subunit"/>
    <property type="evidence" value="ECO:0007669"/>
    <property type="project" value="UniProtKB-UniRule"/>
</dbReference>
<dbReference type="GO" id="GO:0003735">
    <property type="term" value="F:structural constituent of ribosome"/>
    <property type="evidence" value="ECO:0007669"/>
    <property type="project" value="UniProtKB-UniRule"/>
</dbReference>
<dbReference type="GO" id="GO:0006412">
    <property type="term" value="P:translation"/>
    <property type="evidence" value="ECO:0007669"/>
    <property type="project" value="UniProtKB-UniRule"/>
</dbReference>
<dbReference type="HAMAP" id="MF_03122">
    <property type="entry name" value="Ribosomal_eS1_euk"/>
    <property type="match status" value="1"/>
</dbReference>
<dbReference type="InterPro" id="IPR001593">
    <property type="entry name" value="Ribosomal_eS1"/>
</dbReference>
<dbReference type="InterPro" id="IPR018281">
    <property type="entry name" value="Ribosomal_eS1_CS"/>
</dbReference>
<dbReference type="InterPro" id="IPR027500">
    <property type="entry name" value="Ribosomal_eS1_euk"/>
</dbReference>
<dbReference type="PANTHER" id="PTHR11830">
    <property type="entry name" value="40S RIBOSOMAL PROTEIN S3A"/>
    <property type="match status" value="1"/>
</dbReference>
<dbReference type="Pfam" id="PF01015">
    <property type="entry name" value="Ribosomal_S3Ae"/>
    <property type="match status" value="1"/>
</dbReference>
<dbReference type="SMART" id="SM01397">
    <property type="entry name" value="Ribosomal_S3Ae"/>
    <property type="match status" value="1"/>
</dbReference>
<dbReference type="PROSITE" id="PS01191">
    <property type="entry name" value="RIBOSOMAL_S3AE"/>
    <property type="match status" value="1"/>
</dbReference>
<protein>
    <recommendedName>
        <fullName evidence="3">Small ribosomal subunit protein eS1B</fullName>
    </recommendedName>
    <alternativeName>
        <fullName evidence="4">40S ribosomal protein S1-B</fullName>
    </alternativeName>
</protein>